<protein>
    <recommendedName>
        <fullName evidence="1">Methionine import ATP-binding protein MetN 2</fullName>
        <ecNumber evidence="1">7.4.2.11</ecNumber>
    </recommendedName>
</protein>
<gene>
    <name evidence="1" type="primary">metN2</name>
    <name type="ordered locus">RPA2360</name>
</gene>
<comment type="function">
    <text evidence="1">Part of the ABC transporter complex MetNIQ involved in methionine import. Responsible for energy coupling to the transport system.</text>
</comment>
<comment type="catalytic activity">
    <reaction evidence="1">
        <text>L-methionine(out) + ATP + H2O = L-methionine(in) + ADP + phosphate + H(+)</text>
        <dbReference type="Rhea" id="RHEA:29779"/>
        <dbReference type="ChEBI" id="CHEBI:15377"/>
        <dbReference type="ChEBI" id="CHEBI:15378"/>
        <dbReference type="ChEBI" id="CHEBI:30616"/>
        <dbReference type="ChEBI" id="CHEBI:43474"/>
        <dbReference type="ChEBI" id="CHEBI:57844"/>
        <dbReference type="ChEBI" id="CHEBI:456216"/>
        <dbReference type="EC" id="7.4.2.11"/>
    </reaction>
</comment>
<comment type="catalytic activity">
    <reaction evidence="1">
        <text>D-methionine(out) + ATP + H2O = D-methionine(in) + ADP + phosphate + H(+)</text>
        <dbReference type="Rhea" id="RHEA:29767"/>
        <dbReference type="ChEBI" id="CHEBI:15377"/>
        <dbReference type="ChEBI" id="CHEBI:15378"/>
        <dbReference type="ChEBI" id="CHEBI:30616"/>
        <dbReference type="ChEBI" id="CHEBI:43474"/>
        <dbReference type="ChEBI" id="CHEBI:57932"/>
        <dbReference type="ChEBI" id="CHEBI:456216"/>
        <dbReference type="EC" id="7.4.2.11"/>
    </reaction>
</comment>
<comment type="subunit">
    <text evidence="1">The complex is composed of two ATP-binding proteins (MetN), two transmembrane proteins (MetI) and a solute-binding protein (MetQ).</text>
</comment>
<comment type="subcellular location">
    <subcellularLocation>
        <location evidence="1">Cell inner membrane</location>
        <topology evidence="1">Peripheral membrane protein</topology>
    </subcellularLocation>
</comment>
<comment type="similarity">
    <text evidence="1">Belongs to the ABC transporter superfamily. Methionine importer (TC 3.A.1.24) family.</text>
</comment>
<evidence type="ECO:0000255" key="1">
    <source>
        <dbReference type="HAMAP-Rule" id="MF_01719"/>
    </source>
</evidence>
<name>METN2_RHOPA</name>
<feature type="chain" id="PRO_0000270372" description="Methionine import ATP-binding protein MetN 2">
    <location>
        <begin position="1"/>
        <end position="377"/>
    </location>
</feature>
<feature type="domain" description="ABC transporter" evidence="1">
    <location>
        <begin position="25"/>
        <end position="262"/>
    </location>
</feature>
<feature type="binding site" evidence="1">
    <location>
        <begin position="59"/>
        <end position="66"/>
    </location>
    <ligand>
        <name>ATP</name>
        <dbReference type="ChEBI" id="CHEBI:30616"/>
    </ligand>
</feature>
<dbReference type="EC" id="7.4.2.11" evidence="1"/>
<dbReference type="EMBL" id="BX572600">
    <property type="protein sequence ID" value="CAE27801.1"/>
    <property type="molecule type" value="Genomic_DNA"/>
</dbReference>
<dbReference type="SMR" id="Q6N798"/>
<dbReference type="STRING" id="258594.RPA2360"/>
<dbReference type="eggNOG" id="COG1135">
    <property type="taxonomic scope" value="Bacteria"/>
</dbReference>
<dbReference type="HOGENOM" id="CLU_000604_1_3_5"/>
<dbReference type="PhylomeDB" id="Q6N798"/>
<dbReference type="GO" id="GO:0005886">
    <property type="term" value="C:plasma membrane"/>
    <property type="evidence" value="ECO:0007669"/>
    <property type="project" value="UniProtKB-SubCell"/>
</dbReference>
<dbReference type="GO" id="GO:0033232">
    <property type="term" value="F:ABC-type D-methionine transporter activity"/>
    <property type="evidence" value="ECO:0007669"/>
    <property type="project" value="UniProtKB-EC"/>
</dbReference>
<dbReference type="GO" id="GO:0005524">
    <property type="term" value="F:ATP binding"/>
    <property type="evidence" value="ECO:0007669"/>
    <property type="project" value="UniProtKB-KW"/>
</dbReference>
<dbReference type="GO" id="GO:0016887">
    <property type="term" value="F:ATP hydrolysis activity"/>
    <property type="evidence" value="ECO:0007669"/>
    <property type="project" value="InterPro"/>
</dbReference>
<dbReference type="CDD" id="cd03258">
    <property type="entry name" value="ABC_MetN_methionine_transporter"/>
    <property type="match status" value="1"/>
</dbReference>
<dbReference type="FunFam" id="3.40.50.300:FF:000056">
    <property type="entry name" value="Cell division ATP-binding protein FtsE"/>
    <property type="match status" value="1"/>
</dbReference>
<dbReference type="Gene3D" id="3.30.70.260">
    <property type="match status" value="1"/>
</dbReference>
<dbReference type="Gene3D" id="3.40.50.300">
    <property type="entry name" value="P-loop containing nucleotide triphosphate hydrolases"/>
    <property type="match status" value="1"/>
</dbReference>
<dbReference type="InterPro" id="IPR003593">
    <property type="entry name" value="AAA+_ATPase"/>
</dbReference>
<dbReference type="InterPro" id="IPR003439">
    <property type="entry name" value="ABC_transporter-like_ATP-bd"/>
</dbReference>
<dbReference type="InterPro" id="IPR017871">
    <property type="entry name" value="ABC_transporter-like_CS"/>
</dbReference>
<dbReference type="InterPro" id="IPR045865">
    <property type="entry name" value="ACT-like_dom_sf"/>
</dbReference>
<dbReference type="InterPro" id="IPR041701">
    <property type="entry name" value="MetN_ABC"/>
</dbReference>
<dbReference type="InterPro" id="IPR050086">
    <property type="entry name" value="MetN_ABC_transporter-like"/>
</dbReference>
<dbReference type="InterPro" id="IPR018449">
    <property type="entry name" value="NIL_domain"/>
</dbReference>
<dbReference type="InterPro" id="IPR027417">
    <property type="entry name" value="P-loop_NTPase"/>
</dbReference>
<dbReference type="PANTHER" id="PTHR43166">
    <property type="entry name" value="AMINO ACID IMPORT ATP-BINDING PROTEIN"/>
    <property type="match status" value="1"/>
</dbReference>
<dbReference type="PANTHER" id="PTHR43166:SF30">
    <property type="entry name" value="METHIONINE IMPORT ATP-BINDING PROTEIN METN"/>
    <property type="match status" value="1"/>
</dbReference>
<dbReference type="Pfam" id="PF00005">
    <property type="entry name" value="ABC_tran"/>
    <property type="match status" value="1"/>
</dbReference>
<dbReference type="Pfam" id="PF09383">
    <property type="entry name" value="NIL"/>
    <property type="match status" value="1"/>
</dbReference>
<dbReference type="SMART" id="SM00382">
    <property type="entry name" value="AAA"/>
    <property type="match status" value="1"/>
</dbReference>
<dbReference type="SMART" id="SM00930">
    <property type="entry name" value="NIL"/>
    <property type="match status" value="1"/>
</dbReference>
<dbReference type="SUPFAM" id="SSF55021">
    <property type="entry name" value="ACT-like"/>
    <property type="match status" value="1"/>
</dbReference>
<dbReference type="SUPFAM" id="SSF52540">
    <property type="entry name" value="P-loop containing nucleoside triphosphate hydrolases"/>
    <property type="match status" value="1"/>
</dbReference>
<dbReference type="PROSITE" id="PS00211">
    <property type="entry name" value="ABC_TRANSPORTER_1"/>
    <property type="match status" value="1"/>
</dbReference>
<dbReference type="PROSITE" id="PS50893">
    <property type="entry name" value="ABC_TRANSPORTER_2"/>
    <property type="match status" value="1"/>
</dbReference>
<dbReference type="PROSITE" id="PS51264">
    <property type="entry name" value="METN"/>
    <property type="match status" value="1"/>
</dbReference>
<accession>Q6N798</accession>
<organism>
    <name type="scientific">Rhodopseudomonas palustris (strain ATCC BAA-98 / CGA009)</name>
    <dbReference type="NCBI Taxonomy" id="258594"/>
    <lineage>
        <taxon>Bacteria</taxon>
        <taxon>Pseudomonadati</taxon>
        <taxon>Pseudomonadota</taxon>
        <taxon>Alphaproteobacteria</taxon>
        <taxon>Hyphomicrobiales</taxon>
        <taxon>Nitrobacteraceae</taxon>
        <taxon>Rhodopseudomonas</taxon>
    </lineage>
</organism>
<sequence length="377" mass="39781">MNALPSSAEFSRAVGGDAVSREAVIRIEHLSKTFSDAAGPVLDDVSLTIRRGEIHGIIGRSGAGKSTLVRCINLLERPSAGRVIVSGREITSLRGRALRNARRDIGMIFQHFNVLSSHTVAGNVALPFKVAGLPRAEIARRIPPLLELVGLAHKADAYPSELSGGQKQRVGIARALALDPSVLLCDEATSALDPETTDQILALLRDINRKLGLTIVLITHEMHVVRDIATRVAVLDHGRVVEEGATFDVLAFPKSAVARSFLSGLVAHELPPPVAAQLLPAAVPGSDPVLRIVFTGTAAHDPIVADLVSVFGIQPNILHGRIDYVGDRPLGVLTLVAGGAGEKLPAVLSHLSSLGLVVEVIGHAVRSAVARRHSAAR</sequence>
<proteinExistence type="inferred from homology"/>
<reference key="1">
    <citation type="journal article" date="2004" name="Nat. Biotechnol.">
        <title>Complete genome sequence of the metabolically versatile photosynthetic bacterium Rhodopseudomonas palustris.</title>
        <authorList>
            <person name="Larimer F.W."/>
            <person name="Chain P."/>
            <person name="Hauser L."/>
            <person name="Lamerdin J.E."/>
            <person name="Malfatti S."/>
            <person name="Do L."/>
            <person name="Land M.L."/>
            <person name="Pelletier D.A."/>
            <person name="Beatty J.T."/>
            <person name="Lang A.S."/>
            <person name="Tabita F.R."/>
            <person name="Gibson J.L."/>
            <person name="Hanson T.E."/>
            <person name="Bobst C."/>
            <person name="Torres y Torres J.L."/>
            <person name="Peres C."/>
            <person name="Harrison F.H."/>
            <person name="Gibson J."/>
            <person name="Harwood C.S."/>
        </authorList>
    </citation>
    <scope>NUCLEOTIDE SEQUENCE [LARGE SCALE GENOMIC DNA]</scope>
    <source>
        <strain>ATCC BAA-98 / CGA009</strain>
    </source>
</reference>
<keyword id="KW-0029">Amino-acid transport</keyword>
<keyword id="KW-0067">ATP-binding</keyword>
<keyword id="KW-0997">Cell inner membrane</keyword>
<keyword id="KW-1003">Cell membrane</keyword>
<keyword id="KW-0472">Membrane</keyword>
<keyword id="KW-0547">Nucleotide-binding</keyword>
<keyword id="KW-1278">Translocase</keyword>
<keyword id="KW-0813">Transport</keyword>